<proteinExistence type="inferred from homology"/>
<feature type="chain" id="PRO_0000181816" description="tRNA(Ile)-lysidine synthase, chloroplastic">
    <location>
        <begin position="1"/>
        <end position="314"/>
    </location>
</feature>
<feature type="binding site" evidence="1">
    <location>
        <begin position="31"/>
        <end position="36"/>
    </location>
    <ligand>
        <name>ATP</name>
        <dbReference type="ChEBI" id="CHEBI:30616"/>
    </ligand>
</feature>
<gene>
    <name evidence="1" type="primary">tilS</name>
    <name type="synonym">ycf62</name>
</gene>
<evidence type="ECO:0000255" key="1">
    <source>
        <dbReference type="HAMAP-Rule" id="MF_01161"/>
    </source>
</evidence>
<accession>Q9TLW9</accession>
<organism>
    <name type="scientific">Cyanidium caldarium</name>
    <name type="common">Red alga</name>
    <dbReference type="NCBI Taxonomy" id="2771"/>
    <lineage>
        <taxon>Eukaryota</taxon>
        <taxon>Rhodophyta</taxon>
        <taxon>Bangiophyceae</taxon>
        <taxon>Cyanidiales</taxon>
        <taxon>Cyanidiaceae</taxon>
        <taxon>Cyanidium</taxon>
    </lineage>
</organism>
<reference key="1">
    <citation type="journal article" date="2000" name="J. Mol. Evol.">
        <title>The structure and gene repertoire of an ancient red algal plastid genome.</title>
        <authorList>
            <person name="Gloeckner G."/>
            <person name="Rosenthal A."/>
            <person name="Valentin K.-U."/>
        </authorList>
    </citation>
    <scope>NUCLEOTIDE SEQUENCE [LARGE SCALE GENOMIC DNA]</scope>
    <source>
        <strain>RK-1</strain>
    </source>
</reference>
<protein>
    <recommendedName>
        <fullName evidence="1">tRNA(Ile)-lysidine synthase, chloroplastic</fullName>
        <ecNumber evidence="1">6.3.4.19</ecNumber>
    </recommendedName>
    <alternativeName>
        <fullName evidence="1">tRNA(Ile)-2-lysyl-cytidine synthase</fullName>
    </alternativeName>
    <alternativeName>
        <fullName evidence="1">tRNA(Ile)-lysidine synthetase</fullName>
    </alternativeName>
</protein>
<sequence>MKVTILHQKFIRFVYLLDLELIKRKFVLGLSGGQDSLALLKLLCDYRKTYFGLLKLVYCDHRWRLESIANAQRLYYLSEYSNISFYYFATSTFLSSETQSRTWRYKNLLKISLSFEYSYLLTAHTLSDISETTIYRLVRNLRISEINNLLFTFLYIKKTLSISRPLASVTRNDTYWLCSLSYLPLWSDYTNYWLFLSRNRIRQELFPYLKNYFNCSLERYLDGFIYSNKINLITLNIKLKKILSKIFGYTNDGLYFNVSLFKLLPFFYQHILIRDFHFLFFHNYRSPSQFNRLLFAIALEKSQKVFIRKQYHII</sequence>
<dbReference type="EC" id="6.3.4.19" evidence="1"/>
<dbReference type="EMBL" id="AF022186">
    <property type="protein sequence ID" value="AAF12945.1"/>
    <property type="molecule type" value="Genomic_DNA"/>
</dbReference>
<dbReference type="RefSeq" id="NP_045149.1">
    <property type="nucleotide sequence ID" value="NC_001840.1"/>
</dbReference>
<dbReference type="SMR" id="Q9TLW9"/>
<dbReference type="GeneID" id="800190"/>
<dbReference type="GO" id="GO:0009507">
    <property type="term" value="C:chloroplast"/>
    <property type="evidence" value="ECO:0007669"/>
    <property type="project" value="UniProtKB-SubCell"/>
</dbReference>
<dbReference type="GO" id="GO:0005524">
    <property type="term" value="F:ATP binding"/>
    <property type="evidence" value="ECO:0007669"/>
    <property type="project" value="UniProtKB-UniRule"/>
</dbReference>
<dbReference type="GO" id="GO:0032267">
    <property type="term" value="F:tRNA(Ile)-lysidine synthase activity"/>
    <property type="evidence" value="ECO:0007669"/>
    <property type="project" value="UniProtKB-EC"/>
</dbReference>
<dbReference type="GO" id="GO:0006400">
    <property type="term" value="P:tRNA modification"/>
    <property type="evidence" value="ECO:0007669"/>
    <property type="project" value="UniProtKB-UniRule"/>
</dbReference>
<dbReference type="CDD" id="cd01992">
    <property type="entry name" value="TilS_N"/>
    <property type="match status" value="1"/>
</dbReference>
<dbReference type="Gene3D" id="3.40.50.620">
    <property type="entry name" value="HUPs"/>
    <property type="match status" value="1"/>
</dbReference>
<dbReference type="HAMAP" id="MF_01161">
    <property type="entry name" value="tRNA_Ile_lys_synt"/>
    <property type="match status" value="1"/>
</dbReference>
<dbReference type="InterPro" id="IPR014729">
    <property type="entry name" value="Rossmann-like_a/b/a_fold"/>
</dbReference>
<dbReference type="InterPro" id="IPR011063">
    <property type="entry name" value="TilS/TtcA_N"/>
</dbReference>
<dbReference type="InterPro" id="IPR012094">
    <property type="entry name" value="tRNA_Ile_lys_synt"/>
</dbReference>
<dbReference type="InterPro" id="IPR012795">
    <property type="entry name" value="tRNA_Ile_lys_synt_N"/>
</dbReference>
<dbReference type="NCBIfam" id="TIGR02432">
    <property type="entry name" value="lysidine_TilS_N"/>
    <property type="match status" value="1"/>
</dbReference>
<dbReference type="PANTHER" id="PTHR43033">
    <property type="entry name" value="TRNA(ILE)-LYSIDINE SYNTHASE-RELATED"/>
    <property type="match status" value="1"/>
</dbReference>
<dbReference type="PANTHER" id="PTHR43033:SF1">
    <property type="entry name" value="TRNA(ILE)-LYSIDINE SYNTHASE-RELATED"/>
    <property type="match status" value="1"/>
</dbReference>
<dbReference type="Pfam" id="PF01171">
    <property type="entry name" value="ATP_bind_3"/>
    <property type="match status" value="1"/>
</dbReference>
<dbReference type="SUPFAM" id="SSF52402">
    <property type="entry name" value="Adenine nucleotide alpha hydrolases-like"/>
    <property type="match status" value="1"/>
</dbReference>
<geneLocation type="chloroplast"/>
<comment type="function">
    <text evidence="1">Ligates lysine onto the cytidine present at position 34 of the AUA codon-specific tRNA(Ile) that contains the anticodon CAU, in an ATP-dependent manner. Cytidine is converted to lysidine, thus changing the amino acid specificity of the tRNA from methionine to isoleucine.</text>
</comment>
<comment type="catalytic activity">
    <reaction evidence="1">
        <text>cytidine(34) in tRNA(Ile2) + L-lysine + ATP = lysidine(34) in tRNA(Ile2) + AMP + diphosphate + H(+)</text>
        <dbReference type="Rhea" id="RHEA:43744"/>
        <dbReference type="Rhea" id="RHEA-COMP:10625"/>
        <dbReference type="Rhea" id="RHEA-COMP:10670"/>
        <dbReference type="ChEBI" id="CHEBI:15378"/>
        <dbReference type="ChEBI" id="CHEBI:30616"/>
        <dbReference type="ChEBI" id="CHEBI:32551"/>
        <dbReference type="ChEBI" id="CHEBI:33019"/>
        <dbReference type="ChEBI" id="CHEBI:82748"/>
        <dbReference type="ChEBI" id="CHEBI:83665"/>
        <dbReference type="ChEBI" id="CHEBI:456215"/>
        <dbReference type="EC" id="6.3.4.19"/>
    </reaction>
</comment>
<comment type="subcellular location">
    <subcellularLocation>
        <location>Plastid</location>
        <location>Chloroplast</location>
    </subcellularLocation>
</comment>
<comment type="domain">
    <text>The N-terminal region contains the highly conserved SGGXDS motif, predicted to be a P-loop motif involved in ATP binding.</text>
</comment>
<comment type="similarity">
    <text evidence="1">Belongs to the tRNA(Ile)-lysidine synthase family.</text>
</comment>
<name>TILS_CYACA</name>
<keyword id="KW-0067">ATP-binding</keyword>
<keyword id="KW-0150">Chloroplast</keyword>
<keyword id="KW-0436">Ligase</keyword>
<keyword id="KW-0547">Nucleotide-binding</keyword>
<keyword id="KW-0934">Plastid</keyword>
<keyword id="KW-0819">tRNA processing</keyword>